<dbReference type="EC" id="3.1.1.29" evidence="1"/>
<dbReference type="EMBL" id="CP000261">
    <property type="protein sequence ID" value="ABF35057.1"/>
    <property type="status" value="ALT_INIT"/>
    <property type="molecule type" value="Genomic_DNA"/>
</dbReference>
<dbReference type="SMR" id="Q1JEA1"/>
<dbReference type="KEGG" id="spj:MGAS2096_Spy0005"/>
<dbReference type="HOGENOM" id="CLU_062456_4_1_9"/>
<dbReference type="GO" id="GO:0005737">
    <property type="term" value="C:cytoplasm"/>
    <property type="evidence" value="ECO:0007669"/>
    <property type="project" value="UniProtKB-SubCell"/>
</dbReference>
<dbReference type="GO" id="GO:0004045">
    <property type="term" value="F:peptidyl-tRNA hydrolase activity"/>
    <property type="evidence" value="ECO:0007669"/>
    <property type="project" value="UniProtKB-UniRule"/>
</dbReference>
<dbReference type="GO" id="GO:0000049">
    <property type="term" value="F:tRNA binding"/>
    <property type="evidence" value="ECO:0007669"/>
    <property type="project" value="UniProtKB-UniRule"/>
</dbReference>
<dbReference type="GO" id="GO:0006515">
    <property type="term" value="P:protein quality control for misfolded or incompletely synthesized proteins"/>
    <property type="evidence" value="ECO:0007669"/>
    <property type="project" value="UniProtKB-UniRule"/>
</dbReference>
<dbReference type="GO" id="GO:0072344">
    <property type="term" value="P:rescue of stalled ribosome"/>
    <property type="evidence" value="ECO:0007669"/>
    <property type="project" value="UniProtKB-UniRule"/>
</dbReference>
<dbReference type="CDD" id="cd00462">
    <property type="entry name" value="PTH"/>
    <property type="match status" value="1"/>
</dbReference>
<dbReference type="FunFam" id="3.40.50.1470:FF:000001">
    <property type="entry name" value="Peptidyl-tRNA hydrolase"/>
    <property type="match status" value="1"/>
</dbReference>
<dbReference type="Gene3D" id="3.40.50.1470">
    <property type="entry name" value="Peptidyl-tRNA hydrolase"/>
    <property type="match status" value="1"/>
</dbReference>
<dbReference type="HAMAP" id="MF_00083">
    <property type="entry name" value="Pept_tRNA_hydro_bact"/>
    <property type="match status" value="1"/>
</dbReference>
<dbReference type="InterPro" id="IPR001328">
    <property type="entry name" value="Pept_tRNA_hydro"/>
</dbReference>
<dbReference type="InterPro" id="IPR018171">
    <property type="entry name" value="Pept_tRNA_hydro_CS"/>
</dbReference>
<dbReference type="InterPro" id="IPR036416">
    <property type="entry name" value="Pept_tRNA_hydro_sf"/>
</dbReference>
<dbReference type="NCBIfam" id="TIGR00447">
    <property type="entry name" value="pth"/>
    <property type="match status" value="1"/>
</dbReference>
<dbReference type="PANTHER" id="PTHR17224">
    <property type="entry name" value="PEPTIDYL-TRNA HYDROLASE"/>
    <property type="match status" value="1"/>
</dbReference>
<dbReference type="PANTHER" id="PTHR17224:SF1">
    <property type="entry name" value="PEPTIDYL-TRNA HYDROLASE"/>
    <property type="match status" value="1"/>
</dbReference>
<dbReference type="Pfam" id="PF01195">
    <property type="entry name" value="Pept_tRNA_hydro"/>
    <property type="match status" value="1"/>
</dbReference>
<dbReference type="SUPFAM" id="SSF53178">
    <property type="entry name" value="Peptidyl-tRNA hydrolase-like"/>
    <property type="match status" value="1"/>
</dbReference>
<dbReference type="PROSITE" id="PS01195">
    <property type="entry name" value="PEPT_TRNA_HYDROL_1"/>
    <property type="match status" value="1"/>
</dbReference>
<dbReference type="PROSITE" id="PS01196">
    <property type="entry name" value="PEPT_TRNA_HYDROL_2"/>
    <property type="match status" value="1"/>
</dbReference>
<reference key="1">
    <citation type="journal article" date="2006" name="Proc. Natl. Acad. Sci. U.S.A.">
        <title>Molecular genetic anatomy of inter- and intraserotype variation in the human bacterial pathogen group A Streptococcus.</title>
        <authorList>
            <person name="Beres S.B."/>
            <person name="Richter E.W."/>
            <person name="Nagiec M.J."/>
            <person name="Sumby P."/>
            <person name="Porcella S.F."/>
            <person name="DeLeo F.R."/>
            <person name="Musser J.M."/>
        </authorList>
    </citation>
    <scope>NUCLEOTIDE SEQUENCE [LARGE SCALE GENOMIC DNA]</scope>
    <source>
        <strain>MGAS2096</strain>
    </source>
</reference>
<name>PTH_STRPB</name>
<protein>
    <recommendedName>
        <fullName evidence="1">Peptidyl-tRNA hydrolase</fullName>
        <shortName evidence="1">Pth</shortName>
        <ecNumber evidence="1">3.1.1.29</ecNumber>
    </recommendedName>
</protein>
<evidence type="ECO:0000255" key="1">
    <source>
        <dbReference type="HAMAP-Rule" id="MF_00083"/>
    </source>
</evidence>
<evidence type="ECO:0000305" key="2"/>
<feature type="chain" id="PRO_0000264118" description="Peptidyl-tRNA hydrolase">
    <location>
        <begin position="1"/>
        <end position="189"/>
    </location>
</feature>
<feature type="active site" description="Proton acceptor" evidence="1">
    <location>
        <position position="20"/>
    </location>
</feature>
<feature type="binding site" evidence="1">
    <location>
        <position position="15"/>
    </location>
    <ligand>
        <name>tRNA</name>
        <dbReference type="ChEBI" id="CHEBI:17843"/>
    </ligand>
</feature>
<feature type="binding site" evidence="1">
    <location>
        <position position="66"/>
    </location>
    <ligand>
        <name>tRNA</name>
        <dbReference type="ChEBI" id="CHEBI:17843"/>
    </ligand>
</feature>
<feature type="binding site" evidence="1">
    <location>
        <position position="68"/>
    </location>
    <ligand>
        <name>tRNA</name>
        <dbReference type="ChEBI" id="CHEBI:17843"/>
    </ligand>
</feature>
<feature type="binding site" evidence="1">
    <location>
        <position position="114"/>
    </location>
    <ligand>
        <name>tRNA</name>
        <dbReference type="ChEBI" id="CHEBI:17843"/>
    </ligand>
</feature>
<feature type="site" description="Discriminates between blocked and unblocked aminoacyl-tRNA" evidence="1">
    <location>
        <position position="10"/>
    </location>
</feature>
<feature type="site" description="Stabilizes the basic form of H active site to accept a proton" evidence="1">
    <location>
        <position position="93"/>
    </location>
</feature>
<organism>
    <name type="scientific">Streptococcus pyogenes serotype M12 (strain MGAS2096)</name>
    <dbReference type="NCBI Taxonomy" id="370553"/>
    <lineage>
        <taxon>Bacteria</taxon>
        <taxon>Bacillati</taxon>
        <taxon>Bacillota</taxon>
        <taxon>Bacilli</taxon>
        <taxon>Lactobacillales</taxon>
        <taxon>Streptococcaceae</taxon>
        <taxon>Streptococcus</taxon>
    </lineage>
</organism>
<proteinExistence type="inferred from homology"/>
<gene>
    <name evidence="1" type="primary">pth</name>
    <name type="ordered locus">MGAS2096_Spy0005</name>
</gene>
<comment type="function">
    <text evidence="1">Hydrolyzes ribosome-free peptidyl-tRNAs (with 1 or more amino acids incorporated), which drop off the ribosome during protein synthesis, or as a result of ribosome stalling.</text>
</comment>
<comment type="function">
    <text evidence="1">Catalyzes the release of premature peptidyl moieties from peptidyl-tRNA molecules trapped in stalled 50S ribosomal subunits, and thus maintains levels of free tRNAs and 50S ribosomes.</text>
</comment>
<comment type="catalytic activity">
    <reaction evidence="1">
        <text>an N-acyl-L-alpha-aminoacyl-tRNA + H2O = an N-acyl-L-amino acid + a tRNA + H(+)</text>
        <dbReference type="Rhea" id="RHEA:54448"/>
        <dbReference type="Rhea" id="RHEA-COMP:10123"/>
        <dbReference type="Rhea" id="RHEA-COMP:13883"/>
        <dbReference type="ChEBI" id="CHEBI:15377"/>
        <dbReference type="ChEBI" id="CHEBI:15378"/>
        <dbReference type="ChEBI" id="CHEBI:59874"/>
        <dbReference type="ChEBI" id="CHEBI:78442"/>
        <dbReference type="ChEBI" id="CHEBI:138191"/>
        <dbReference type="EC" id="3.1.1.29"/>
    </reaction>
</comment>
<comment type="subunit">
    <text evidence="1">Monomer.</text>
</comment>
<comment type="subcellular location">
    <subcellularLocation>
        <location evidence="1">Cytoplasm</location>
    </subcellularLocation>
</comment>
<comment type="similarity">
    <text evidence="1">Belongs to the PTH family.</text>
</comment>
<comment type="sequence caution" evidence="2">
    <conflict type="erroneous initiation">
        <sequence resource="EMBL-CDS" id="ABF35057"/>
    </conflict>
    <text>Extended N-terminus.</text>
</comment>
<accession>Q1JEA1</accession>
<sequence length="189" mass="21197">MVKMIVGLGNPGSKYEKTKHNIGFMAIDNIVKNLDVTFTDDKNFKAQIGSTFINHEKVYFVKPTTFMNNSGIAVKALLTYYNIDITDLIVIYDDLDMEVSKLRLRSKGSAGGHNGIKSIIAHIGTQEFNRIKVGIGRPLKGMTVINHVMGQFNTEDNIAISLTLDRVVNAVKFYLQENDFEKTMQKFNG</sequence>
<keyword id="KW-0963">Cytoplasm</keyword>
<keyword id="KW-0378">Hydrolase</keyword>
<keyword id="KW-0694">RNA-binding</keyword>
<keyword id="KW-0820">tRNA-binding</keyword>